<feature type="chain" id="PRO_0000312512" description="Espin-like protein">
    <location>
        <begin position="1"/>
        <end position="1005"/>
    </location>
</feature>
<feature type="repeat" description="ANK 1">
    <location>
        <begin position="1"/>
        <end position="31"/>
    </location>
</feature>
<feature type="repeat" description="ANK 2">
    <location>
        <begin position="35"/>
        <end position="64"/>
    </location>
</feature>
<feature type="repeat" description="ANK 3">
    <location>
        <begin position="69"/>
        <end position="99"/>
    </location>
</feature>
<feature type="repeat" description="ANK 4">
    <location>
        <begin position="103"/>
        <end position="132"/>
    </location>
</feature>
<feature type="repeat" description="ANK 5">
    <location>
        <begin position="136"/>
        <end position="166"/>
    </location>
</feature>
<feature type="repeat" description="ANK 6">
    <location>
        <begin position="170"/>
        <end position="200"/>
    </location>
</feature>
<feature type="repeat" description="ANK 7">
    <location>
        <begin position="204"/>
        <end position="234"/>
    </location>
</feature>
<feature type="repeat" description="ANK 8">
    <location>
        <begin position="238"/>
        <end position="267"/>
    </location>
</feature>
<feature type="repeat" description="ANK 9">
    <location>
        <begin position="270"/>
        <end position="299"/>
    </location>
</feature>
<feature type="repeat" description="ANK 10">
    <location>
        <begin position="303"/>
        <end position="332"/>
    </location>
</feature>
<feature type="region of interest" description="Disordered" evidence="2">
    <location>
        <begin position="355"/>
        <end position="383"/>
    </location>
</feature>
<feature type="region of interest" description="Disordered" evidence="2">
    <location>
        <begin position="458"/>
        <end position="480"/>
    </location>
</feature>
<feature type="region of interest" description="Disordered" evidence="2">
    <location>
        <begin position="611"/>
        <end position="643"/>
    </location>
</feature>
<feature type="region of interest" description="Disordered" evidence="2">
    <location>
        <begin position="692"/>
        <end position="729"/>
    </location>
</feature>
<feature type="region of interest" description="Disordered" evidence="2">
    <location>
        <begin position="764"/>
        <end position="794"/>
    </location>
</feature>
<feature type="region of interest" description="Disordered" evidence="2">
    <location>
        <begin position="951"/>
        <end position="975"/>
    </location>
</feature>
<feature type="coiled-coil region" evidence="1">
    <location>
        <begin position="502"/>
        <end position="539"/>
    </location>
</feature>
<feature type="compositionally biased region" description="Basic and acidic residues" evidence="2">
    <location>
        <begin position="458"/>
        <end position="469"/>
    </location>
</feature>
<keyword id="KW-0009">Actin-binding</keyword>
<keyword id="KW-0040">ANK repeat</keyword>
<keyword id="KW-0966">Cell projection</keyword>
<keyword id="KW-0175">Coiled coil</keyword>
<keyword id="KW-1009">Hearing</keyword>
<keyword id="KW-1185">Reference proteome</keyword>
<keyword id="KW-0677">Repeat</keyword>
<proteinExistence type="evidence at protein level"/>
<evidence type="ECO:0000255" key="1"/>
<evidence type="ECO:0000256" key="2">
    <source>
        <dbReference type="SAM" id="MobiDB-lite"/>
    </source>
</evidence>
<evidence type="ECO:0000269" key="3">
    <source>
    </source>
</evidence>
<evidence type="ECO:0000269" key="4">
    <source>
    </source>
</evidence>
<comment type="function">
    <text evidence="4">Binds to but does not cross-link actin. Required for the formation and maintenance of inner ear hair cell stereocilia and staircase formation. Essential for normal hearing.</text>
</comment>
<comment type="subunit">
    <text evidence="4">Interacts with MYO3A (via C-terminus). Interacts with MYO3B (via C-terminus).</text>
</comment>
<comment type="subcellular location">
    <subcellularLocation>
        <location evidence="4">Cell projection</location>
        <location evidence="4">Stereocilium</location>
    </subcellularLocation>
</comment>
<comment type="tissue specificity">
    <text evidence="3 4">Expressed in inner ear hair cells (PubMed:25582750). Expressed in utricle hair bundles (at protein level). Expressed in choclea (at protein level) (PubMed:26926603).</text>
</comment>
<dbReference type="EMBL" id="AK134448">
    <property type="protein sequence ID" value="BAE22148.1"/>
    <property type="molecule type" value="mRNA"/>
</dbReference>
<dbReference type="CCDS" id="CCDS15160.1"/>
<dbReference type="RefSeq" id="NP_001028464.1">
    <property type="nucleotide sequence ID" value="NM_001033292.4"/>
</dbReference>
<dbReference type="SMR" id="Q3UYR4"/>
<dbReference type="FunCoup" id="Q3UYR4">
    <property type="interactions" value="86"/>
</dbReference>
<dbReference type="STRING" id="10090.ENSMUSP00000086294"/>
<dbReference type="GlyGen" id="Q3UYR4">
    <property type="glycosylation" value="1 site"/>
</dbReference>
<dbReference type="iPTMnet" id="Q3UYR4"/>
<dbReference type="PhosphoSitePlus" id="Q3UYR4"/>
<dbReference type="PaxDb" id="10090-ENSMUSP00000086294"/>
<dbReference type="ProteomicsDB" id="275544"/>
<dbReference type="Antibodypedia" id="66046">
    <property type="antibodies" value="68 antibodies from 12 providers"/>
</dbReference>
<dbReference type="Ensembl" id="ENSMUST00000088904.10">
    <property type="protein sequence ID" value="ENSMUSP00000086294.4"/>
    <property type="gene ID" value="ENSMUSG00000049515.13"/>
</dbReference>
<dbReference type="GeneID" id="227357"/>
<dbReference type="KEGG" id="mmu:227357"/>
<dbReference type="UCSC" id="uc007cah.1">
    <property type="organism name" value="mouse"/>
</dbReference>
<dbReference type="AGR" id="MGI:2685402"/>
<dbReference type="CTD" id="339768"/>
<dbReference type="MGI" id="MGI:2685402">
    <property type="gene designation" value="Espnl"/>
</dbReference>
<dbReference type="VEuPathDB" id="HostDB:ENSMUSG00000049515"/>
<dbReference type="eggNOG" id="KOG0504">
    <property type="taxonomic scope" value="Eukaryota"/>
</dbReference>
<dbReference type="GeneTree" id="ENSGT00940000156970"/>
<dbReference type="HOGENOM" id="CLU_017253_0_0_1"/>
<dbReference type="InParanoid" id="Q3UYR4"/>
<dbReference type="OMA" id="NGQLECC"/>
<dbReference type="OrthoDB" id="10261302at2759"/>
<dbReference type="PhylomeDB" id="Q3UYR4"/>
<dbReference type="TreeFam" id="TF326392"/>
<dbReference type="BioGRID-ORCS" id="227357">
    <property type="hits" value="2 hits in 77 CRISPR screens"/>
</dbReference>
<dbReference type="PRO" id="PR:Q3UYR4"/>
<dbReference type="Proteomes" id="UP000000589">
    <property type="component" value="Chromosome 1"/>
</dbReference>
<dbReference type="RNAct" id="Q3UYR4">
    <property type="molecule type" value="protein"/>
</dbReference>
<dbReference type="Bgee" id="ENSMUSG00000049515">
    <property type="expression patterns" value="Expressed in saccule of membranous labyrinth and 3 other cell types or tissues"/>
</dbReference>
<dbReference type="ExpressionAtlas" id="Q3UYR4">
    <property type="expression patterns" value="baseline and differential"/>
</dbReference>
<dbReference type="GO" id="GO:0005829">
    <property type="term" value="C:cytosol"/>
    <property type="evidence" value="ECO:0000304"/>
    <property type="project" value="Reactome"/>
</dbReference>
<dbReference type="GO" id="GO:0032426">
    <property type="term" value="C:stereocilium tip"/>
    <property type="evidence" value="ECO:0000314"/>
    <property type="project" value="UniProtKB"/>
</dbReference>
<dbReference type="GO" id="GO:0051015">
    <property type="term" value="F:actin filament binding"/>
    <property type="evidence" value="ECO:0000314"/>
    <property type="project" value="UniProtKB"/>
</dbReference>
<dbReference type="GO" id="GO:0007605">
    <property type="term" value="P:sensory perception of sound"/>
    <property type="evidence" value="ECO:0000315"/>
    <property type="project" value="UniProtKB"/>
</dbReference>
<dbReference type="FunFam" id="1.25.40.20:FF:000268">
    <property type="entry name" value="Espin like"/>
    <property type="match status" value="1"/>
</dbReference>
<dbReference type="FunFam" id="1.25.40.20:FF:000295">
    <property type="entry name" value="Espin like"/>
    <property type="match status" value="1"/>
</dbReference>
<dbReference type="FunFam" id="1.25.40.20:FF:000255">
    <property type="entry name" value="espin-like protein"/>
    <property type="match status" value="1"/>
</dbReference>
<dbReference type="Gene3D" id="1.25.40.20">
    <property type="entry name" value="Ankyrin repeat-containing domain"/>
    <property type="match status" value="3"/>
</dbReference>
<dbReference type="InterPro" id="IPR002110">
    <property type="entry name" value="Ankyrin_rpt"/>
</dbReference>
<dbReference type="InterPro" id="IPR036770">
    <property type="entry name" value="Ankyrin_rpt-contain_sf"/>
</dbReference>
<dbReference type="InterPro" id="IPR052420">
    <property type="entry name" value="Espin/Espin-like"/>
</dbReference>
<dbReference type="PANTHER" id="PTHR24153">
    <property type="entry name" value="ESPIN"/>
    <property type="match status" value="1"/>
</dbReference>
<dbReference type="PANTHER" id="PTHR24153:SF0">
    <property type="entry name" value="ESPIN-LIKE PROTEIN"/>
    <property type="match status" value="1"/>
</dbReference>
<dbReference type="Pfam" id="PF12796">
    <property type="entry name" value="Ank_2"/>
    <property type="match status" value="3"/>
</dbReference>
<dbReference type="Pfam" id="PF13637">
    <property type="entry name" value="Ank_4"/>
    <property type="match status" value="1"/>
</dbReference>
<dbReference type="SMART" id="SM00248">
    <property type="entry name" value="ANK"/>
    <property type="match status" value="9"/>
</dbReference>
<dbReference type="SUPFAM" id="SSF48403">
    <property type="entry name" value="Ankyrin repeat"/>
    <property type="match status" value="2"/>
</dbReference>
<dbReference type="PROSITE" id="PS50297">
    <property type="entry name" value="ANK_REP_REGION"/>
    <property type="match status" value="1"/>
</dbReference>
<dbReference type="PROSITE" id="PS50088">
    <property type="entry name" value="ANK_REPEAT"/>
    <property type="match status" value="4"/>
</dbReference>
<protein>
    <recommendedName>
        <fullName>Espin-like protein</fullName>
    </recommendedName>
</protein>
<sequence length="1005" mass="108868">MEAQQALVASKDGDMATLERLFEAGALRPDITDDLGAGLVHHATRAGHLDCVKFLVQRAKLPGNQQAHNGATPVHDAAATGNLAELCWLVRDAGCGLQDQDASGVSPLHLAARFGHPALVEWLLREGHAATLETLEGALPLHHAAVSGDLTCLKLLTAAHSSGVNQRTCSGASPLYLACQEGHLHLAQFLVKDCGADVRLRALDGMSSLHAAAAHGHYSLVVWLVTFTDIGLTARDNEGATALHFAARGGHTPILDRLLLMGAPIMRDSWGGTPLHDAAENGHMECCQTLLSHHVDPFLRDEDGYTAIDLAEYHGHQDCAQFLREMSRPVRVLMTPPPPPFPPPPLLAAKLSLEEERRGDSGLKSPSSATLSPVWPAQPVPREPMACTAPLRVTTPDALQGPEVEARDSRAGLATLQLDGLPAGDLDMLVPTQDERGRPIPEWKRQVMVRKLQARLGADHPPEDQDQSQRQDSGPTAAEQATWRYSQTHQAILGPFGELLTEDDLVYLEKQINDLQLRRRCQEYESELGRLAAQLQALLPEPLVSITVNSHFLPRAPGLEDEEAPVLATELEASEEPGKAEPRGQPLPFWCSHIGRLVRSMSLLLKGMNGLAQGEEKPPSPVPQDLGKETIAGPSRSEAQREIQECGVSVRTLRGNFEFAPDLPCALNSGPCELGVRPGQCLRGCWSAPPQPRGDAMGGEPGPGDTEEASDSGISCEEAPSEAGAGPGLDLASLRKERIVMLFLGHWKKSAYTPALRTAACRTLEAQRARSRGPEAAGSPRPSSPQPSDGPRLGHLWQQRGIITHLLGTWKAIMAHVPARQLRRLSRRERGPLSPEQFLPHVDGAPVPYNSLSLDLFMLGYFQLLECDLPAEERKMRHLLCFEVFEHLGAHGWEAVRAFHKAVTDEVAAGRRAWTDGFEDIKARFFGSSQGPPWDVEPGRKLGLTPLGSLPHASLPGSGPEPAVPPRLGSDSQGSSFNSGDICGYIDRSFAFWKEKEAEMFNFGE</sequence>
<accession>Q3UYR4</accession>
<gene>
    <name type="primary">Espnl</name>
    <name type="synonym">Gm556</name>
</gene>
<reference key="1">
    <citation type="journal article" date="2005" name="Science">
        <title>The transcriptional landscape of the mammalian genome.</title>
        <authorList>
            <person name="Carninci P."/>
            <person name="Kasukawa T."/>
            <person name="Katayama S."/>
            <person name="Gough J."/>
            <person name="Frith M.C."/>
            <person name="Maeda N."/>
            <person name="Oyama R."/>
            <person name="Ravasi T."/>
            <person name="Lenhard B."/>
            <person name="Wells C."/>
            <person name="Kodzius R."/>
            <person name="Shimokawa K."/>
            <person name="Bajic V.B."/>
            <person name="Brenner S.E."/>
            <person name="Batalov S."/>
            <person name="Forrest A.R."/>
            <person name="Zavolan M."/>
            <person name="Davis M.J."/>
            <person name="Wilming L.G."/>
            <person name="Aidinis V."/>
            <person name="Allen J.E."/>
            <person name="Ambesi-Impiombato A."/>
            <person name="Apweiler R."/>
            <person name="Aturaliya R.N."/>
            <person name="Bailey T.L."/>
            <person name="Bansal M."/>
            <person name="Baxter L."/>
            <person name="Beisel K.W."/>
            <person name="Bersano T."/>
            <person name="Bono H."/>
            <person name="Chalk A.M."/>
            <person name="Chiu K.P."/>
            <person name="Choudhary V."/>
            <person name="Christoffels A."/>
            <person name="Clutterbuck D.R."/>
            <person name="Crowe M.L."/>
            <person name="Dalla E."/>
            <person name="Dalrymple B.P."/>
            <person name="de Bono B."/>
            <person name="Della Gatta G."/>
            <person name="di Bernardo D."/>
            <person name="Down T."/>
            <person name="Engstrom P."/>
            <person name="Fagiolini M."/>
            <person name="Faulkner G."/>
            <person name="Fletcher C.F."/>
            <person name="Fukushima T."/>
            <person name="Furuno M."/>
            <person name="Futaki S."/>
            <person name="Gariboldi M."/>
            <person name="Georgii-Hemming P."/>
            <person name="Gingeras T.R."/>
            <person name="Gojobori T."/>
            <person name="Green R.E."/>
            <person name="Gustincich S."/>
            <person name="Harbers M."/>
            <person name="Hayashi Y."/>
            <person name="Hensch T.K."/>
            <person name="Hirokawa N."/>
            <person name="Hill D."/>
            <person name="Huminiecki L."/>
            <person name="Iacono M."/>
            <person name="Ikeo K."/>
            <person name="Iwama A."/>
            <person name="Ishikawa T."/>
            <person name="Jakt M."/>
            <person name="Kanapin A."/>
            <person name="Katoh M."/>
            <person name="Kawasawa Y."/>
            <person name="Kelso J."/>
            <person name="Kitamura H."/>
            <person name="Kitano H."/>
            <person name="Kollias G."/>
            <person name="Krishnan S.P."/>
            <person name="Kruger A."/>
            <person name="Kummerfeld S.K."/>
            <person name="Kurochkin I.V."/>
            <person name="Lareau L.F."/>
            <person name="Lazarevic D."/>
            <person name="Lipovich L."/>
            <person name="Liu J."/>
            <person name="Liuni S."/>
            <person name="McWilliam S."/>
            <person name="Madan Babu M."/>
            <person name="Madera M."/>
            <person name="Marchionni L."/>
            <person name="Matsuda H."/>
            <person name="Matsuzawa S."/>
            <person name="Miki H."/>
            <person name="Mignone F."/>
            <person name="Miyake S."/>
            <person name="Morris K."/>
            <person name="Mottagui-Tabar S."/>
            <person name="Mulder N."/>
            <person name="Nakano N."/>
            <person name="Nakauchi H."/>
            <person name="Ng P."/>
            <person name="Nilsson R."/>
            <person name="Nishiguchi S."/>
            <person name="Nishikawa S."/>
            <person name="Nori F."/>
            <person name="Ohara O."/>
            <person name="Okazaki Y."/>
            <person name="Orlando V."/>
            <person name="Pang K.C."/>
            <person name="Pavan W.J."/>
            <person name="Pavesi G."/>
            <person name="Pesole G."/>
            <person name="Petrovsky N."/>
            <person name="Piazza S."/>
            <person name="Reed J."/>
            <person name="Reid J.F."/>
            <person name="Ring B.Z."/>
            <person name="Ringwald M."/>
            <person name="Rost B."/>
            <person name="Ruan Y."/>
            <person name="Salzberg S.L."/>
            <person name="Sandelin A."/>
            <person name="Schneider C."/>
            <person name="Schoenbach C."/>
            <person name="Sekiguchi K."/>
            <person name="Semple C.A."/>
            <person name="Seno S."/>
            <person name="Sessa L."/>
            <person name="Sheng Y."/>
            <person name="Shibata Y."/>
            <person name="Shimada H."/>
            <person name="Shimada K."/>
            <person name="Silva D."/>
            <person name="Sinclair B."/>
            <person name="Sperling S."/>
            <person name="Stupka E."/>
            <person name="Sugiura K."/>
            <person name="Sultana R."/>
            <person name="Takenaka Y."/>
            <person name="Taki K."/>
            <person name="Tammoja K."/>
            <person name="Tan S.L."/>
            <person name="Tang S."/>
            <person name="Taylor M.S."/>
            <person name="Tegner J."/>
            <person name="Teichmann S.A."/>
            <person name="Ueda H.R."/>
            <person name="van Nimwegen E."/>
            <person name="Verardo R."/>
            <person name="Wei C.L."/>
            <person name="Yagi K."/>
            <person name="Yamanishi H."/>
            <person name="Zabarovsky E."/>
            <person name="Zhu S."/>
            <person name="Zimmer A."/>
            <person name="Hide W."/>
            <person name="Bult C."/>
            <person name="Grimmond S.M."/>
            <person name="Teasdale R.D."/>
            <person name="Liu E.T."/>
            <person name="Brusic V."/>
            <person name="Quackenbush J."/>
            <person name="Wahlestedt C."/>
            <person name="Mattick J.S."/>
            <person name="Hume D.A."/>
            <person name="Kai C."/>
            <person name="Sasaki D."/>
            <person name="Tomaru Y."/>
            <person name="Fukuda S."/>
            <person name="Kanamori-Katayama M."/>
            <person name="Suzuki M."/>
            <person name="Aoki J."/>
            <person name="Arakawa T."/>
            <person name="Iida J."/>
            <person name="Imamura K."/>
            <person name="Itoh M."/>
            <person name="Kato T."/>
            <person name="Kawaji H."/>
            <person name="Kawagashira N."/>
            <person name="Kawashima T."/>
            <person name="Kojima M."/>
            <person name="Kondo S."/>
            <person name="Konno H."/>
            <person name="Nakano K."/>
            <person name="Ninomiya N."/>
            <person name="Nishio T."/>
            <person name="Okada M."/>
            <person name="Plessy C."/>
            <person name="Shibata K."/>
            <person name="Shiraki T."/>
            <person name="Suzuki S."/>
            <person name="Tagami M."/>
            <person name="Waki K."/>
            <person name="Watahiki A."/>
            <person name="Okamura-Oho Y."/>
            <person name="Suzuki H."/>
            <person name="Kawai J."/>
            <person name="Hayashizaki Y."/>
        </authorList>
    </citation>
    <scope>NUCLEOTIDE SEQUENCE [LARGE SCALE MRNA]</scope>
    <source>
        <strain>C57BL/6J</strain>
        <tissue>Testis</tissue>
    </source>
</reference>
<reference key="2">
    <citation type="journal article" date="2015" name="Int. J. Biochem. Cell Biol.">
        <title>Identification of stage-specific markers during differentiation of hair cells from mouse inner ear stem cells or progenitor cells in vitro.</title>
        <authorList>
            <person name="Liu Q."/>
            <person name="Chen J."/>
            <person name="Gao X."/>
            <person name="Ding J."/>
            <person name="Tang Z."/>
            <person name="Zhang C."/>
            <person name="Chen J."/>
            <person name="Li L."/>
            <person name="Chen P."/>
            <person name="Wang J."/>
        </authorList>
    </citation>
    <scope>TISSUE SPECIFICITY</scope>
</reference>
<reference key="3">
    <citation type="journal article" date="2016" name="Nat. Commun.">
        <title>Stereocilia-staircase spacing is influenced by myosin III motors and their cargos espin-1 and espin-like.</title>
        <authorList>
            <person name="Ebrahim S."/>
            <person name="Avenarius M.R."/>
            <person name="Grati M."/>
            <person name="Krey J.F."/>
            <person name="Windsor A.M."/>
            <person name="Sousa A.D."/>
            <person name="Ballesteros A."/>
            <person name="Cui R."/>
            <person name="Millis B.A."/>
            <person name="Salles F.T."/>
            <person name="Baird M.A."/>
            <person name="Davidson M.W."/>
            <person name="Jones S.M."/>
            <person name="Choi D."/>
            <person name="Dong L."/>
            <person name="Raval M.H."/>
            <person name="Yengo C.M."/>
            <person name="Barr-Gillespie P.G."/>
            <person name="Kachar B."/>
        </authorList>
    </citation>
    <scope>FUNCTION</scope>
    <scope>INTERACTION WITH MYO3A AND MYO3B</scope>
    <scope>SUBCELLULAR LOCATION</scope>
</reference>
<name>ESPNL_MOUSE</name>
<organism>
    <name type="scientific">Mus musculus</name>
    <name type="common">Mouse</name>
    <dbReference type="NCBI Taxonomy" id="10090"/>
    <lineage>
        <taxon>Eukaryota</taxon>
        <taxon>Metazoa</taxon>
        <taxon>Chordata</taxon>
        <taxon>Craniata</taxon>
        <taxon>Vertebrata</taxon>
        <taxon>Euteleostomi</taxon>
        <taxon>Mammalia</taxon>
        <taxon>Eutheria</taxon>
        <taxon>Euarchontoglires</taxon>
        <taxon>Glires</taxon>
        <taxon>Rodentia</taxon>
        <taxon>Myomorpha</taxon>
        <taxon>Muroidea</taxon>
        <taxon>Muridae</taxon>
        <taxon>Murinae</taxon>
        <taxon>Mus</taxon>
        <taxon>Mus</taxon>
    </lineage>
</organism>